<reference key="1">
    <citation type="journal article" date="2003" name="DNA Res.">
        <title>Prediction of the coding sequences of mouse homologues of KIAA gene: III. The complete nucleotide sequences of 500 mouse KIAA-homologous cDNAs identified by screening of terminal sequences of cDNA clones randomly sampled from size-fractionated libraries.</title>
        <authorList>
            <person name="Okazaki N."/>
            <person name="Kikuno R."/>
            <person name="Ohara R."/>
            <person name="Inamoto S."/>
            <person name="Koseki H."/>
            <person name="Hiraoka S."/>
            <person name="Saga Y."/>
            <person name="Nagase T."/>
            <person name="Ohara O."/>
            <person name="Koga H."/>
        </authorList>
    </citation>
    <scope>NUCLEOTIDE SEQUENCE [LARGE SCALE MRNA] (ISOFORM 1)</scope>
    <source>
        <tissue>Embryonic tail</tissue>
    </source>
</reference>
<reference key="2">
    <citation type="journal article" date="2005" name="Science">
        <title>The transcriptional landscape of the mammalian genome.</title>
        <authorList>
            <person name="Carninci P."/>
            <person name="Kasukawa T."/>
            <person name="Katayama S."/>
            <person name="Gough J."/>
            <person name="Frith M.C."/>
            <person name="Maeda N."/>
            <person name="Oyama R."/>
            <person name="Ravasi T."/>
            <person name="Lenhard B."/>
            <person name="Wells C."/>
            <person name="Kodzius R."/>
            <person name="Shimokawa K."/>
            <person name="Bajic V.B."/>
            <person name="Brenner S.E."/>
            <person name="Batalov S."/>
            <person name="Forrest A.R."/>
            <person name="Zavolan M."/>
            <person name="Davis M.J."/>
            <person name="Wilming L.G."/>
            <person name="Aidinis V."/>
            <person name="Allen J.E."/>
            <person name="Ambesi-Impiombato A."/>
            <person name="Apweiler R."/>
            <person name="Aturaliya R.N."/>
            <person name="Bailey T.L."/>
            <person name="Bansal M."/>
            <person name="Baxter L."/>
            <person name="Beisel K.W."/>
            <person name="Bersano T."/>
            <person name="Bono H."/>
            <person name="Chalk A.M."/>
            <person name="Chiu K.P."/>
            <person name="Choudhary V."/>
            <person name="Christoffels A."/>
            <person name="Clutterbuck D.R."/>
            <person name="Crowe M.L."/>
            <person name="Dalla E."/>
            <person name="Dalrymple B.P."/>
            <person name="de Bono B."/>
            <person name="Della Gatta G."/>
            <person name="di Bernardo D."/>
            <person name="Down T."/>
            <person name="Engstrom P."/>
            <person name="Fagiolini M."/>
            <person name="Faulkner G."/>
            <person name="Fletcher C.F."/>
            <person name="Fukushima T."/>
            <person name="Furuno M."/>
            <person name="Futaki S."/>
            <person name="Gariboldi M."/>
            <person name="Georgii-Hemming P."/>
            <person name="Gingeras T.R."/>
            <person name="Gojobori T."/>
            <person name="Green R.E."/>
            <person name="Gustincich S."/>
            <person name="Harbers M."/>
            <person name="Hayashi Y."/>
            <person name="Hensch T.K."/>
            <person name="Hirokawa N."/>
            <person name="Hill D."/>
            <person name="Huminiecki L."/>
            <person name="Iacono M."/>
            <person name="Ikeo K."/>
            <person name="Iwama A."/>
            <person name="Ishikawa T."/>
            <person name="Jakt M."/>
            <person name="Kanapin A."/>
            <person name="Katoh M."/>
            <person name="Kawasawa Y."/>
            <person name="Kelso J."/>
            <person name="Kitamura H."/>
            <person name="Kitano H."/>
            <person name="Kollias G."/>
            <person name="Krishnan S.P."/>
            <person name="Kruger A."/>
            <person name="Kummerfeld S.K."/>
            <person name="Kurochkin I.V."/>
            <person name="Lareau L.F."/>
            <person name="Lazarevic D."/>
            <person name="Lipovich L."/>
            <person name="Liu J."/>
            <person name="Liuni S."/>
            <person name="McWilliam S."/>
            <person name="Madan Babu M."/>
            <person name="Madera M."/>
            <person name="Marchionni L."/>
            <person name="Matsuda H."/>
            <person name="Matsuzawa S."/>
            <person name="Miki H."/>
            <person name="Mignone F."/>
            <person name="Miyake S."/>
            <person name="Morris K."/>
            <person name="Mottagui-Tabar S."/>
            <person name="Mulder N."/>
            <person name="Nakano N."/>
            <person name="Nakauchi H."/>
            <person name="Ng P."/>
            <person name="Nilsson R."/>
            <person name="Nishiguchi S."/>
            <person name="Nishikawa S."/>
            <person name="Nori F."/>
            <person name="Ohara O."/>
            <person name="Okazaki Y."/>
            <person name="Orlando V."/>
            <person name="Pang K.C."/>
            <person name="Pavan W.J."/>
            <person name="Pavesi G."/>
            <person name="Pesole G."/>
            <person name="Petrovsky N."/>
            <person name="Piazza S."/>
            <person name="Reed J."/>
            <person name="Reid J.F."/>
            <person name="Ring B.Z."/>
            <person name="Ringwald M."/>
            <person name="Rost B."/>
            <person name="Ruan Y."/>
            <person name="Salzberg S.L."/>
            <person name="Sandelin A."/>
            <person name="Schneider C."/>
            <person name="Schoenbach C."/>
            <person name="Sekiguchi K."/>
            <person name="Semple C.A."/>
            <person name="Seno S."/>
            <person name="Sessa L."/>
            <person name="Sheng Y."/>
            <person name="Shibata Y."/>
            <person name="Shimada H."/>
            <person name="Shimada K."/>
            <person name="Silva D."/>
            <person name="Sinclair B."/>
            <person name="Sperling S."/>
            <person name="Stupka E."/>
            <person name="Sugiura K."/>
            <person name="Sultana R."/>
            <person name="Takenaka Y."/>
            <person name="Taki K."/>
            <person name="Tammoja K."/>
            <person name="Tan S.L."/>
            <person name="Tang S."/>
            <person name="Taylor M.S."/>
            <person name="Tegner J."/>
            <person name="Teichmann S.A."/>
            <person name="Ueda H.R."/>
            <person name="van Nimwegen E."/>
            <person name="Verardo R."/>
            <person name="Wei C.L."/>
            <person name="Yagi K."/>
            <person name="Yamanishi H."/>
            <person name="Zabarovsky E."/>
            <person name="Zhu S."/>
            <person name="Zimmer A."/>
            <person name="Hide W."/>
            <person name="Bult C."/>
            <person name="Grimmond S.M."/>
            <person name="Teasdale R.D."/>
            <person name="Liu E.T."/>
            <person name="Brusic V."/>
            <person name="Quackenbush J."/>
            <person name="Wahlestedt C."/>
            <person name="Mattick J.S."/>
            <person name="Hume D.A."/>
            <person name="Kai C."/>
            <person name="Sasaki D."/>
            <person name="Tomaru Y."/>
            <person name="Fukuda S."/>
            <person name="Kanamori-Katayama M."/>
            <person name="Suzuki M."/>
            <person name="Aoki J."/>
            <person name="Arakawa T."/>
            <person name="Iida J."/>
            <person name="Imamura K."/>
            <person name="Itoh M."/>
            <person name="Kato T."/>
            <person name="Kawaji H."/>
            <person name="Kawagashira N."/>
            <person name="Kawashima T."/>
            <person name="Kojima M."/>
            <person name="Kondo S."/>
            <person name="Konno H."/>
            <person name="Nakano K."/>
            <person name="Ninomiya N."/>
            <person name="Nishio T."/>
            <person name="Okada M."/>
            <person name="Plessy C."/>
            <person name="Shibata K."/>
            <person name="Shiraki T."/>
            <person name="Suzuki S."/>
            <person name="Tagami M."/>
            <person name="Waki K."/>
            <person name="Watahiki A."/>
            <person name="Okamura-Oho Y."/>
            <person name="Suzuki H."/>
            <person name="Kawai J."/>
            <person name="Hayashizaki Y."/>
        </authorList>
    </citation>
    <scope>NUCLEOTIDE SEQUENCE [LARGE SCALE MRNA] (ISOFORM 1)</scope>
    <source>
        <strain>DBA/2J</strain>
    </source>
</reference>
<reference key="3">
    <citation type="journal article" date="2004" name="Genome Res.">
        <title>The status, quality, and expansion of the NIH full-length cDNA project: the Mammalian Gene Collection (MGC).</title>
        <authorList>
            <consortium name="The MGC Project Team"/>
        </authorList>
    </citation>
    <scope>NUCLEOTIDE SEQUENCE [LARGE SCALE MRNA] OF 1-406 (ISOFORM 1)</scope>
    <scope>NUCLEOTIDE SEQUENCE [LARGE SCALE MRNA] OF 182-581 (ISOFORM 2)</scope>
    <source>
        <strain>FVB/N</strain>
        <tissue>Kidney</tissue>
        <tissue>Mammary tumor</tissue>
    </source>
</reference>
<reference key="4">
    <citation type="journal article" date="2007" name="Proc. Natl. Acad. Sci. U.S.A.">
        <title>Large-scale phosphorylation analysis of mouse liver.</title>
        <authorList>
            <person name="Villen J."/>
            <person name="Beausoleil S.A."/>
            <person name="Gerber S.A."/>
            <person name="Gygi S.P."/>
        </authorList>
    </citation>
    <scope>PHOSPHORYLATION [LARGE SCALE ANALYSIS] AT SER-324</scope>
    <scope>IDENTIFICATION BY MASS SPECTROMETRY [LARGE SCALE ANALYSIS]</scope>
    <source>
        <tissue>Liver</tissue>
    </source>
</reference>
<reference key="5">
    <citation type="journal article" date="2009" name="Immunity">
        <title>The phagosomal proteome in interferon-gamma-activated macrophages.</title>
        <authorList>
            <person name="Trost M."/>
            <person name="English L."/>
            <person name="Lemieux S."/>
            <person name="Courcelles M."/>
            <person name="Desjardins M."/>
            <person name="Thibault P."/>
        </authorList>
    </citation>
    <scope>PHOSPHORYLATION [LARGE SCALE ANALYSIS] AT SER-316</scope>
    <scope>IDENTIFICATION BY MASS SPECTROMETRY [LARGE SCALE ANALYSIS]</scope>
</reference>
<reference key="6">
    <citation type="journal article" date="2010" name="Cell">
        <title>A tissue-specific atlas of mouse protein phosphorylation and expression.</title>
        <authorList>
            <person name="Huttlin E.L."/>
            <person name="Jedrychowski M.P."/>
            <person name="Elias J.E."/>
            <person name="Goswami T."/>
            <person name="Rad R."/>
            <person name="Beausoleil S.A."/>
            <person name="Villen J."/>
            <person name="Haas W."/>
            <person name="Sowa M.E."/>
            <person name="Gygi S.P."/>
        </authorList>
    </citation>
    <scope>PHOSPHORYLATION [LARGE SCALE ANALYSIS] AT SER-63; SER-88; SER-147; SER-248; SER-316 AND SER-324</scope>
    <scope>IDENTIFICATION BY MASS SPECTROMETRY [LARGE SCALE ANALYSIS]</scope>
    <source>
        <tissue>Brain</tissue>
        <tissue>Brown adipose tissue</tissue>
        <tissue>Heart</tissue>
        <tissue>Kidney</tissue>
        <tissue>Lung</tissue>
        <tissue>Pancreas</tissue>
        <tissue>Spleen</tissue>
        <tissue>Testis</tissue>
    </source>
</reference>
<reference key="7">
    <citation type="journal article" date="2011" name="J. Cell Biol.">
        <title>SLAIN2 links microtubule plus end-tracking proteins and controls microtubule growth in interphase.</title>
        <authorList>
            <person name="van der Vaart B."/>
            <person name="Manatschal C."/>
            <person name="Grigoriev I."/>
            <person name="Olieric V."/>
            <person name="Gouveia S.M."/>
            <person name="Bjelic S."/>
            <person name="Demmers J."/>
            <person name="Vorobjev I."/>
            <person name="Hoogenraad C.C."/>
            <person name="Steinmetz M.O."/>
            <person name="Akhmanova A."/>
        </authorList>
    </citation>
    <scope>FUNCTION</scope>
    <scope>INTERACTION WITH CLIP1 AND MAPRE1</scope>
    <scope>IDENTIFICATION BY MASS SPECTROMETRY</scope>
</reference>
<reference key="8">
    <citation type="journal article" date="2014" name="Mol. Cell. Proteomics">
        <title>Immunoaffinity enrichment and mass spectrometry analysis of protein methylation.</title>
        <authorList>
            <person name="Guo A."/>
            <person name="Gu H."/>
            <person name="Zhou J."/>
            <person name="Mulhern D."/>
            <person name="Wang Y."/>
            <person name="Lee K.A."/>
            <person name="Yang V."/>
            <person name="Aguiar M."/>
            <person name="Kornhauser J."/>
            <person name="Jia X."/>
            <person name="Ren J."/>
            <person name="Beausoleil S.A."/>
            <person name="Silva J.C."/>
            <person name="Vemulapalli V."/>
            <person name="Bedford M.T."/>
            <person name="Comb M.J."/>
        </authorList>
    </citation>
    <scope>METHYLATION [LARGE SCALE ANALYSIS] AT ARG-538 AND ARG-551</scope>
    <scope>IDENTIFICATION BY MASS SPECTROMETRY [LARGE SCALE ANALYSIS]</scope>
    <source>
        <tissue>Embryo</tissue>
    </source>
</reference>
<organism>
    <name type="scientific">Mus musculus</name>
    <name type="common">Mouse</name>
    <dbReference type="NCBI Taxonomy" id="10090"/>
    <lineage>
        <taxon>Eukaryota</taxon>
        <taxon>Metazoa</taxon>
        <taxon>Chordata</taxon>
        <taxon>Craniata</taxon>
        <taxon>Vertebrata</taxon>
        <taxon>Euteleostomi</taxon>
        <taxon>Mammalia</taxon>
        <taxon>Eutheria</taxon>
        <taxon>Euarchontoglires</taxon>
        <taxon>Glires</taxon>
        <taxon>Rodentia</taxon>
        <taxon>Myomorpha</taxon>
        <taxon>Muroidea</taxon>
        <taxon>Muridae</taxon>
        <taxon>Murinae</taxon>
        <taxon>Mus</taxon>
        <taxon>Mus</taxon>
    </lineage>
</organism>
<evidence type="ECO:0000250" key="1"/>
<evidence type="ECO:0000250" key="2">
    <source>
        <dbReference type="UniProtKB" id="Q9P270"/>
    </source>
</evidence>
<evidence type="ECO:0000255" key="3"/>
<evidence type="ECO:0000256" key="4">
    <source>
        <dbReference type="SAM" id="MobiDB-lite"/>
    </source>
</evidence>
<evidence type="ECO:0000269" key="5">
    <source>
    </source>
</evidence>
<evidence type="ECO:0000303" key="6">
    <source>
    </source>
</evidence>
<evidence type="ECO:0000305" key="7"/>
<evidence type="ECO:0007744" key="8">
    <source>
    </source>
</evidence>
<evidence type="ECO:0007744" key="9">
    <source>
    </source>
</evidence>
<evidence type="ECO:0007744" key="10">
    <source>
    </source>
</evidence>
<evidence type="ECO:0007744" key="11">
    <source>
    </source>
</evidence>
<protein>
    <recommendedName>
        <fullName>SLAIN motif-containing protein 2</fullName>
    </recommendedName>
</protein>
<proteinExistence type="evidence at protein level"/>
<accession>Q8CI08</accession>
<accession>Q05DK1</accession>
<accession>Q3UJI9</accession>
<accession>Q6ZPQ5</accession>
<dbReference type="EMBL" id="AK129365">
    <property type="protein sequence ID" value="BAC98175.1"/>
    <property type="status" value="ALT_INIT"/>
    <property type="molecule type" value="mRNA"/>
</dbReference>
<dbReference type="EMBL" id="AK146432">
    <property type="protein sequence ID" value="BAE27166.1"/>
    <property type="status" value="ALT_INIT"/>
    <property type="molecule type" value="mRNA"/>
</dbReference>
<dbReference type="EMBL" id="BC010836">
    <property type="protein sequence ID" value="AAH10836.1"/>
    <property type="status" value="ALT_SEQ"/>
    <property type="molecule type" value="mRNA"/>
</dbReference>
<dbReference type="EMBL" id="BC038019">
    <property type="protein sequence ID" value="AAH38019.1"/>
    <property type="status" value="ALT_SEQ"/>
    <property type="molecule type" value="mRNA"/>
</dbReference>
<dbReference type="CCDS" id="CCDS19335.2">
    <molecule id="Q8CI08-2"/>
</dbReference>
<dbReference type="CCDS" id="CCDS51517.1">
    <molecule id="Q8CI08-1"/>
</dbReference>
<dbReference type="RefSeq" id="NP_001106894.1">
    <molecule id="Q8CI08-1"/>
    <property type="nucleotide sequence ID" value="NM_001113423.2"/>
</dbReference>
<dbReference type="RefSeq" id="NP_705795.2">
    <molecule id="Q8CI08-2"/>
    <property type="nucleotide sequence ID" value="NM_153567.3"/>
</dbReference>
<dbReference type="SMR" id="Q8CI08"/>
<dbReference type="BioGRID" id="217891">
    <property type="interactions" value="13"/>
</dbReference>
<dbReference type="FunCoup" id="Q8CI08">
    <property type="interactions" value="1376"/>
</dbReference>
<dbReference type="IntAct" id="Q8CI08">
    <property type="interactions" value="7"/>
</dbReference>
<dbReference type="MINT" id="Q8CI08"/>
<dbReference type="STRING" id="10090.ENSMUSP00000115871"/>
<dbReference type="GlyGen" id="Q8CI08">
    <property type="glycosylation" value="3 sites, 2 N-linked glycans (2 sites), 1 O-linked glycan (1 site)"/>
</dbReference>
<dbReference type="iPTMnet" id="Q8CI08"/>
<dbReference type="PhosphoSitePlus" id="Q8CI08"/>
<dbReference type="SwissPalm" id="Q8CI08"/>
<dbReference type="jPOST" id="Q8CI08"/>
<dbReference type="PaxDb" id="10090-ENSMUSP00000115871"/>
<dbReference type="PeptideAtlas" id="Q8CI08"/>
<dbReference type="ProteomicsDB" id="261417">
    <molecule id="Q8CI08-1"/>
</dbReference>
<dbReference type="ProteomicsDB" id="261418">
    <molecule id="Q8CI08-2"/>
</dbReference>
<dbReference type="Pumba" id="Q8CI08"/>
<dbReference type="Antibodypedia" id="23807">
    <property type="antibodies" value="101 antibodies from 25 providers"/>
</dbReference>
<dbReference type="DNASU" id="75991"/>
<dbReference type="Ensembl" id="ENSMUST00000143829.5">
    <molecule id="Q8CI08-2"/>
    <property type="protein sequence ID" value="ENSMUSP00000115871.2"/>
    <property type="gene ID" value="ENSMUSG00000036087.19"/>
</dbReference>
<dbReference type="Ensembl" id="ENSMUST00000144843.8">
    <molecule id="Q8CI08-1"/>
    <property type="protein sequence ID" value="ENSMUSP00000116528.2"/>
    <property type="gene ID" value="ENSMUSG00000036087.19"/>
</dbReference>
<dbReference type="GeneID" id="75991"/>
<dbReference type="KEGG" id="mmu:75991"/>
<dbReference type="UCSC" id="uc008xsh.3">
    <molecule id="Q8CI08-1"/>
    <property type="organism name" value="mouse"/>
</dbReference>
<dbReference type="UCSC" id="uc008xsi.1">
    <molecule id="Q8CI08-2"/>
    <property type="organism name" value="mouse"/>
</dbReference>
<dbReference type="AGR" id="MGI:1923241"/>
<dbReference type="CTD" id="57606"/>
<dbReference type="MGI" id="MGI:1923241">
    <property type="gene designation" value="Slain2"/>
</dbReference>
<dbReference type="VEuPathDB" id="HostDB:ENSMUSG00000036087"/>
<dbReference type="eggNOG" id="ENOG502QSZP">
    <property type="taxonomic scope" value="Eukaryota"/>
</dbReference>
<dbReference type="GeneTree" id="ENSGT00390000017860"/>
<dbReference type="HOGENOM" id="CLU_027278_2_0_1"/>
<dbReference type="InParanoid" id="Q8CI08"/>
<dbReference type="OMA" id="XSLPAPK"/>
<dbReference type="OrthoDB" id="87874at9989"/>
<dbReference type="PhylomeDB" id="Q8CI08"/>
<dbReference type="TreeFam" id="TF331616"/>
<dbReference type="BioGRID-ORCS" id="75991">
    <property type="hits" value="0 hits in 76 CRISPR screens"/>
</dbReference>
<dbReference type="CD-CODE" id="CE726F99">
    <property type="entry name" value="Postsynaptic density"/>
</dbReference>
<dbReference type="ChiTaRS" id="Slain2">
    <property type="organism name" value="mouse"/>
</dbReference>
<dbReference type="PRO" id="PR:Q8CI08"/>
<dbReference type="Proteomes" id="UP000000589">
    <property type="component" value="Chromosome 5"/>
</dbReference>
<dbReference type="RNAct" id="Q8CI08">
    <property type="molecule type" value="protein"/>
</dbReference>
<dbReference type="Bgee" id="ENSMUSG00000036087">
    <property type="expression patterns" value="Expressed in interventricular septum and 247 other cell types or tissues"/>
</dbReference>
<dbReference type="ExpressionAtlas" id="Q8CI08">
    <property type="expression patterns" value="baseline and differential"/>
</dbReference>
<dbReference type="GO" id="GO:0005813">
    <property type="term" value="C:centrosome"/>
    <property type="evidence" value="ECO:0007669"/>
    <property type="project" value="Ensembl"/>
</dbReference>
<dbReference type="GO" id="GO:0005829">
    <property type="term" value="C:cytosol"/>
    <property type="evidence" value="ECO:0007669"/>
    <property type="project" value="Ensembl"/>
</dbReference>
<dbReference type="GO" id="GO:0015630">
    <property type="term" value="C:microtubule cytoskeleton"/>
    <property type="evidence" value="ECO:0000250"/>
    <property type="project" value="UniProtKB"/>
</dbReference>
<dbReference type="GO" id="GO:0035371">
    <property type="term" value="C:microtubule plus-end"/>
    <property type="evidence" value="ECO:0007669"/>
    <property type="project" value="Ensembl"/>
</dbReference>
<dbReference type="GO" id="GO:0031122">
    <property type="term" value="P:cytoplasmic microtubule organization"/>
    <property type="evidence" value="ECO:0000315"/>
    <property type="project" value="UniProtKB"/>
</dbReference>
<dbReference type="GO" id="GO:0007020">
    <property type="term" value="P:microtubule nucleation"/>
    <property type="evidence" value="ECO:0000250"/>
    <property type="project" value="UniProtKB"/>
</dbReference>
<dbReference type="GO" id="GO:0031116">
    <property type="term" value="P:positive regulation of microtubule polymerization"/>
    <property type="evidence" value="ECO:0000250"/>
    <property type="project" value="UniProtKB"/>
</dbReference>
<dbReference type="GO" id="GO:0031113">
    <property type="term" value="P:regulation of microtubule polymerization"/>
    <property type="evidence" value="ECO:0000315"/>
    <property type="project" value="UniProtKB"/>
</dbReference>
<dbReference type="InterPro" id="IPR026179">
    <property type="entry name" value="Slain"/>
</dbReference>
<dbReference type="PANTHER" id="PTHR22406">
    <property type="entry name" value="NASCENT POLYPEPTIDE-ASSOCIATED COMPLEX SUBUNIT ALPHA, MUSCLE-SPECIFIC FORM"/>
    <property type="match status" value="1"/>
</dbReference>
<dbReference type="PANTHER" id="PTHR22406:SF4">
    <property type="entry name" value="SLAIN MOTIF-CONTAINING PROTEIN 2"/>
    <property type="match status" value="1"/>
</dbReference>
<dbReference type="Pfam" id="PF15301">
    <property type="entry name" value="SLAIN"/>
    <property type="match status" value="1"/>
</dbReference>
<keyword id="KW-0007">Acetylation</keyword>
<keyword id="KW-0025">Alternative splicing</keyword>
<keyword id="KW-0175">Coiled coil</keyword>
<keyword id="KW-0963">Cytoplasm</keyword>
<keyword id="KW-0206">Cytoskeleton</keyword>
<keyword id="KW-0488">Methylation</keyword>
<keyword id="KW-0597">Phosphoprotein</keyword>
<keyword id="KW-1185">Reference proteome</keyword>
<name>SLAI2_MOUSE</name>
<gene>
    <name type="primary">Slain2</name>
    <name type="synonym">Kiaa1458</name>
</gene>
<comment type="function">
    <text evidence="5">Binds to the plus end of microtubules and regulates microtubule dynamics and microtubule organization. Promotes cytoplasmic microtubule nucleation and elongation. Required for normal structure of the microtubule cytoskeleton during interphase.</text>
</comment>
<comment type="subunit">
    <text evidence="1">Interacts with CLIP1, CLIP2, CKAP5, CLASP1, MAPRE1 and MAPRE3.</text>
</comment>
<comment type="subcellular location">
    <subcellularLocation>
        <location evidence="1">Cytoplasm</location>
        <location evidence="1">Cytoskeleton</location>
    </subcellularLocation>
    <text evidence="1">Colocalizes with microtubules. Detected at the plus end of growing microtubules (By similarity).</text>
</comment>
<comment type="alternative products">
    <event type="alternative splicing"/>
    <isoform>
        <id>Q8CI08-1</id>
        <name>1</name>
        <sequence type="displayed"/>
    </isoform>
    <isoform>
        <id>Q8CI08-2</id>
        <name>2</name>
        <sequence type="described" ref="VSP_030834"/>
    </isoform>
</comment>
<comment type="domain">
    <text evidence="1">The N-terminus forms a two-stranded coiled coil.</text>
</comment>
<comment type="PTM">
    <text evidence="1">Is highly phosphorylated during mitosis, but not during interphase. The highly phosphorylated form does not localize at microtubule plus ends and does not interact with MAPRE1 or CKAP5 (By similarity).</text>
</comment>
<comment type="similarity">
    <text evidence="7">Belongs to the SLAIN motif-containing family.</text>
</comment>
<comment type="sequence caution" evidence="7">
    <conflict type="miscellaneous discrepancy">
        <sequence resource="EMBL-CDS" id="AAH10836"/>
    </conflict>
    <text>Contaminating sequence. Potential poly-A sequence.</text>
</comment>
<comment type="sequence caution" evidence="7">
    <conflict type="miscellaneous discrepancy">
        <sequence resource="EMBL-CDS" id="AAH10836"/>
    </conflict>
    <text>Contaminating sequence. Potential vector sequence.</text>
</comment>
<comment type="sequence caution" evidence="7">
    <conflict type="erroneous initiation">
        <sequence resource="EMBL-CDS" id="AAH38019"/>
    </conflict>
    <text>Truncated N-terminus.</text>
</comment>
<comment type="sequence caution" evidence="7">
    <conflict type="erroneous initiation">
        <sequence resource="EMBL-CDS" id="BAC98175"/>
    </conflict>
    <text>Extended N-terminus.</text>
</comment>
<comment type="sequence caution" evidence="7">
    <conflict type="erroneous initiation">
        <sequence resource="EMBL-CDS" id="BAE27166"/>
    </conflict>
    <text>Extended N-terminus.</text>
</comment>
<sequence length="581" mass="62378">MEDVNSNVNADQEVRKLQELVKKLEKQNEQLRSRSGAVQGAGLLGPGSPARVGVSTPSSGAASPRGFPLGLGAKASGGAGSGPRRTSSEDLRDATSLLAAGEGGLLDEVEPLRPDELERLSGWEEEEESWLYSSPKKKLTPMQKSVSPLVWCRQVLDYPSPDVECAKKSLIHKLDQTMSALKRQNLYNNPFNSVSYSNSYSPNASSPYSSGFNSPSSTPVRPPIVKQLILPGNSGNFKSSSDRNPPLSPQSSIDSELSASELDEDSIGSNYKLNDVTDVQILARMQEESLRQEYAASTSRRSSGSSCNSTRRGTFSDQELDAQSLDDEDDSLQHAVHPALNRFSPSPRNSPRPSPKQSPRNSPRSRSPARGIEYSRASPQPMISRLQQPRLSLQGHPTDLQTSNVKNEEKLRRSLPNLSRTSSTQVDSVKSSRSDSNFQVPNGGIPRMQPQASAIPSPGKFRSPAAPSPLALRQPVKAFSNHGSGSGSQETTQFTQTTSSPGPPVVQNSAPANPSSNINSATLTRPAGTTAMRSGLPRPSAPSAGGIPVPRSKLVQPVRRSLPAPKSYGSMKDDSWKDGCY</sequence>
<feature type="chain" id="PRO_0000316967" description="SLAIN motif-containing protein 2">
    <location>
        <begin position="1"/>
        <end position="581"/>
    </location>
</feature>
<feature type="region of interest" description="Disordered" evidence="4">
    <location>
        <begin position="27"/>
        <end position="90"/>
    </location>
</feature>
<feature type="region of interest" description="Disordered" evidence="4">
    <location>
        <begin position="199"/>
        <end position="262"/>
    </location>
</feature>
<feature type="region of interest" description="Disordered" evidence="4">
    <location>
        <begin position="293"/>
        <end position="317"/>
    </location>
</feature>
<feature type="region of interest" description="Disordered" evidence="4">
    <location>
        <begin position="338"/>
        <end position="581"/>
    </location>
</feature>
<feature type="coiled-coil region" evidence="3">
    <location>
        <begin position="4"/>
        <end position="39"/>
    </location>
</feature>
<feature type="compositionally biased region" description="Low complexity" evidence="4">
    <location>
        <begin position="199"/>
        <end position="219"/>
    </location>
</feature>
<feature type="compositionally biased region" description="Polar residues" evidence="4">
    <location>
        <begin position="233"/>
        <end position="243"/>
    </location>
</feature>
<feature type="compositionally biased region" description="Low complexity" evidence="4">
    <location>
        <begin position="251"/>
        <end position="260"/>
    </location>
</feature>
<feature type="compositionally biased region" description="Low complexity" evidence="4">
    <location>
        <begin position="297"/>
        <end position="313"/>
    </location>
</feature>
<feature type="compositionally biased region" description="Low complexity" evidence="4">
    <location>
        <begin position="357"/>
        <end position="368"/>
    </location>
</feature>
<feature type="compositionally biased region" description="Polar residues" evidence="4">
    <location>
        <begin position="416"/>
        <end position="440"/>
    </location>
</feature>
<feature type="compositionally biased region" description="Low complexity" evidence="4">
    <location>
        <begin position="487"/>
        <end position="500"/>
    </location>
</feature>
<feature type="compositionally biased region" description="Low complexity" evidence="4">
    <location>
        <begin position="508"/>
        <end position="521"/>
    </location>
</feature>
<feature type="compositionally biased region" description="Basic and acidic residues" evidence="4">
    <location>
        <begin position="571"/>
        <end position="581"/>
    </location>
</feature>
<feature type="site" description="Important for interaction with CLIP1" evidence="1">
    <location>
        <position position="581"/>
    </location>
</feature>
<feature type="modified residue" description="N-acetylmethionine" evidence="2">
    <location>
        <position position="1"/>
    </location>
</feature>
<feature type="modified residue" description="Phosphoserine" evidence="2">
    <location>
        <position position="48"/>
    </location>
</feature>
<feature type="modified residue" description="Phosphoserine" evidence="10">
    <location>
        <position position="63"/>
    </location>
</feature>
<feature type="modified residue" description="Phosphoserine" evidence="10">
    <location>
        <position position="88"/>
    </location>
</feature>
<feature type="modified residue" description="Phosphoserine" evidence="2">
    <location>
        <position position="134"/>
    </location>
</feature>
<feature type="modified residue" description="Phosphoserine" evidence="10">
    <location>
        <position position="147"/>
    </location>
</feature>
<feature type="modified residue" description="Phosphoserine" evidence="2">
    <location>
        <position position="160"/>
    </location>
</feature>
<feature type="modified residue" description="Phosphoserine" evidence="2">
    <location>
        <position position="179"/>
    </location>
</feature>
<feature type="modified residue" description="Phosphoserine" evidence="10">
    <location>
        <position position="248"/>
    </location>
</feature>
<feature type="modified residue" description="Phosphoserine" evidence="2">
    <location>
        <position position="251"/>
    </location>
</feature>
<feature type="modified residue" description="Phosphoserine" evidence="2">
    <location>
        <position position="252"/>
    </location>
</feature>
<feature type="modified residue" description="Phosphoserine" evidence="2">
    <location>
        <position position="255"/>
    </location>
</feature>
<feature type="modified residue" description="Phosphoserine" evidence="9 10">
    <location>
        <position position="316"/>
    </location>
</feature>
<feature type="modified residue" description="Phosphoserine" evidence="8 10">
    <location>
        <position position="324"/>
    </location>
</feature>
<feature type="modified residue" description="Phosphoserine" evidence="2">
    <location>
        <position position="378"/>
    </location>
</feature>
<feature type="modified residue" description="Phosphoserine" evidence="2">
    <location>
        <position position="392"/>
    </location>
</feature>
<feature type="modified residue" description="Phosphoserine" evidence="2">
    <location>
        <position position="414"/>
    </location>
</feature>
<feature type="modified residue" description="Phosphoserine" evidence="2">
    <location>
        <position position="434"/>
    </location>
</feature>
<feature type="modified residue" description="Phosphoserine" evidence="2">
    <location>
        <position position="457"/>
    </location>
</feature>
<feature type="modified residue" description="Phosphoserine" evidence="2">
    <location>
        <position position="463"/>
    </location>
</feature>
<feature type="modified residue" description="Phosphoserine" evidence="2">
    <location>
        <position position="468"/>
    </location>
</feature>
<feature type="modified residue" description="Omega-N-methylarginine" evidence="11">
    <location>
        <position position="538"/>
    </location>
</feature>
<feature type="modified residue" description="Omega-N-methylarginine" evidence="11">
    <location>
        <position position="551"/>
    </location>
</feature>
<feature type="splice variant" id="VSP_030834" description="In isoform 2." evidence="6">
    <original>AI</original>
    <variation>ATSQRLKSLPRTSLKAKQLLPTSSTKRV</variation>
    <location>
        <begin position="454"/>
        <end position="455"/>
    </location>
</feature>
<feature type="sequence conflict" description="In Ref. 2; BAE27166." evidence="7" ref="2">
    <original>R</original>
    <variation>H</variation>
    <location>
        <position position="462"/>
    </location>
</feature>